<evidence type="ECO:0000255" key="1">
    <source>
        <dbReference type="PROSITE-ProRule" id="PRU00257"/>
    </source>
</evidence>
<dbReference type="EMBL" id="U13633">
    <property type="protein sequence ID" value="AAM01213.1"/>
    <property type="molecule type" value="Genomic_DNA"/>
</dbReference>
<dbReference type="EMBL" id="AY090559">
    <property type="protein sequence ID" value="AAM08038.1"/>
    <property type="molecule type" value="Genomic_DNA"/>
</dbReference>
<dbReference type="RefSeq" id="WP_000854920.1">
    <property type="nucleotide sequence ID" value="NZ_RHRR02000001.1"/>
</dbReference>
<dbReference type="SMR" id="Q79RI9"/>
<dbReference type="MEROPS" id="S24.002"/>
<dbReference type="OrthoDB" id="9791537at2"/>
<dbReference type="GO" id="GO:0003677">
    <property type="term" value="F:DNA binding"/>
    <property type="evidence" value="ECO:0007669"/>
    <property type="project" value="UniProtKB-KW"/>
</dbReference>
<dbReference type="CDD" id="cd00093">
    <property type="entry name" value="HTH_XRE"/>
    <property type="match status" value="1"/>
</dbReference>
<dbReference type="CDD" id="cd06529">
    <property type="entry name" value="S24_LexA-like"/>
    <property type="match status" value="1"/>
</dbReference>
<dbReference type="Gene3D" id="1.10.260.40">
    <property type="entry name" value="lambda repressor-like DNA-binding domains"/>
    <property type="match status" value="1"/>
</dbReference>
<dbReference type="Gene3D" id="2.10.109.10">
    <property type="entry name" value="Umud Fragment, subunit A"/>
    <property type="match status" value="1"/>
</dbReference>
<dbReference type="InterPro" id="IPR001387">
    <property type="entry name" value="Cro/C1-type_HTH"/>
</dbReference>
<dbReference type="InterPro" id="IPR010982">
    <property type="entry name" value="Lambda_DNA-bd_dom_sf"/>
</dbReference>
<dbReference type="InterPro" id="IPR039418">
    <property type="entry name" value="LexA-like"/>
</dbReference>
<dbReference type="InterPro" id="IPR036286">
    <property type="entry name" value="LexA/Signal_pep-like_sf"/>
</dbReference>
<dbReference type="InterPro" id="IPR050077">
    <property type="entry name" value="LexA_repressor"/>
</dbReference>
<dbReference type="InterPro" id="IPR015927">
    <property type="entry name" value="Peptidase_S24_S26A/B/C"/>
</dbReference>
<dbReference type="PANTHER" id="PTHR33516">
    <property type="entry name" value="LEXA REPRESSOR"/>
    <property type="match status" value="1"/>
</dbReference>
<dbReference type="PANTHER" id="PTHR33516:SF2">
    <property type="entry name" value="LEXA REPRESSOR-RELATED"/>
    <property type="match status" value="1"/>
</dbReference>
<dbReference type="Pfam" id="PF01381">
    <property type="entry name" value="HTH_3"/>
    <property type="match status" value="1"/>
</dbReference>
<dbReference type="Pfam" id="PF00717">
    <property type="entry name" value="Peptidase_S24"/>
    <property type="match status" value="1"/>
</dbReference>
<dbReference type="SMART" id="SM00530">
    <property type="entry name" value="HTH_XRE"/>
    <property type="match status" value="1"/>
</dbReference>
<dbReference type="SUPFAM" id="SSF47413">
    <property type="entry name" value="lambda repressor-like DNA-binding domains"/>
    <property type="match status" value="1"/>
</dbReference>
<dbReference type="SUPFAM" id="SSF51306">
    <property type="entry name" value="LexA/Signal peptidase"/>
    <property type="match status" value="1"/>
</dbReference>
<dbReference type="PROSITE" id="PS50943">
    <property type="entry name" value="HTH_CROC1"/>
    <property type="match status" value="1"/>
</dbReference>
<sequence length="215" mass="23491">MKTLSERLNHALQLTGVTQSELARRIGIKQQSISQICSGKSARSRYTMQIAEALRVNAHWLATGDGEIGLGVGNVEVGPDIKGRIPLINWVQAGDWTEIAEGFAHEDAEEWREVTGKAHEGCFALRVKGDSMENPSGKKSIPEGAVIVVDPELPYSSGSLVVARLDDSKEATFKQLVIDGEQKYLKPLNPQYPAIPINGNCTIIGVVRQAIIDFW</sequence>
<reference key="1">
    <citation type="journal article" date="2001" name="J. Bacteriol.">
        <title>Formation of chromosomal tandem arrays of the SXT element and R391, two conjugative chromosomally integrating elements that share an attachment site.</title>
        <authorList>
            <person name="Hochhut B."/>
            <person name="Beaber J.W."/>
            <person name="Woodgate R."/>
            <person name="Waldor M.K."/>
        </authorList>
    </citation>
    <scope>NUCLEOTIDE SEQUENCE [GENOMIC DNA]</scope>
</reference>
<reference key="2">
    <citation type="journal article" date="2002" name="J. Bacteriol.">
        <title>R391: a conjugative integrating mosaic comprised of phage, plasmid, and transposon elements.</title>
        <authorList>
            <person name="Boeltner D."/>
            <person name="MacMahon C."/>
            <person name="Pembroke J.T."/>
            <person name="Strike P."/>
            <person name="Osborn A.M."/>
        </authorList>
    </citation>
    <scope>NUCLEOTIDE SEQUENCE [GENOMIC DNA]</scope>
</reference>
<organism>
    <name type="scientific">Providencia rettgeri</name>
    <dbReference type="NCBI Taxonomy" id="587"/>
    <lineage>
        <taxon>Bacteria</taxon>
        <taxon>Pseudomonadati</taxon>
        <taxon>Pseudomonadota</taxon>
        <taxon>Gammaproteobacteria</taxon>
        <taxon>Enterobacterales</taxon>
        <taxon>Morganellaceae</taxon>
        <taxon>Providencia</taxon>
    </lineage>
</organism>
<accession>Q79RI9</accession>
<accession>Q8RIV8</accession>
<comment type="function">
    <text>May control the expression of the integrase and inhibit excision of the mobile element R391, and regulate the expression of other genes as well.</text>
</comment>
<gene>
    <name type="ORF">ORF-96</name>
</gene>
<name>TR96_PRORE</name>
<keyword id="KW-0238">DNA-binding</keyword>
<keyword id="KW-0678">Repressor</keyword>
<keyword id="KW-0804">Transcription</keyword>
<keyword id="KW-0805">Transcription regulation</keyword>
<proteinExistence type="predicted"/>
<feature type="chain" id="PRO_0000149739" description="HTH-type transcriptional regulator for conjugative element R391">
    <location>
        <begin position="1"/>
        <end position="215"/>
    </location>
</feature>
<feature type="domain" description="HTH cro/C1-type" evidence="1">
    <location>
        <begin position="8"/>
        <end position="61"/>
    </location>
</feature>
<feature type="DNA-binding region" description="H-T-H motif" evidence="1">
    <location>
        <begin position="19"/>
        <end position="38"/>
    </location>
</feature>
<protein>
    <recommendedName>
        <fullName>HTH-type transcriptional regulator for conjugative element R391</fullName>
    </recommendedName>
    <alternativeName>
        <fullName>ORF-96 protein</fullName>
    </alternativeName>
</protein>